<dbReference type="EMBL" id="CR626927">
    <property type="protein sequence ID" value="CAH09680.1"/>
    <property type="molecule type" value="Genomic_DNA"/>
</dbReference>
<dbReference type="RefSeq" id="WP_005782187.1">
    <property type="nucleotide sequence ID" value="NZ_UFTH01000001.1"/>
</dbReference>
<dbReference type="SMR" id="Q5L8A8"/>
<dbReference type="PaxDb" id="272559-BF9343_3899"/>
<dbReference type="GeneID" id="93105325"/>
<dbReference type="KEGG" id="bfs:BF9343_3899"/>
<dbReference type="eggNOG" id="COG0051">
    <property type="taxonomic scope" value="Bacteria"/>
</dbReference>
<dbReference type="HOGENOM" id="CLU_122625_1_3_10"/>
<dbReference type="Proteomes" id="UP000006731">
    <property type="component" value="Chromosome"/>
</dbReference>
<dbReference type="GO" id="GO:1990904">
    <property type="term" value="C:ribonucleoprotein complex"/>
    <property type="evidence" value="ECO:0007669"/>
    <property type="project" value="UniProtKB-KW"/>
</dbReference>
<dbReference type="GO" id="GO:0005840">
    <property type="term" value="C:ribosome"/>
    <property type="evidence" value="ECO:0007669"/>
    <property type="project" value="UniProtKB-KW"/>
</dbReference>
<dbReference type="GO" id="GO:0003735">
    <property type="term" value="F:structural constituent of ribosome"/>
    <property type="evidence" value="ECO:0007669"/>
    <property type="project" value="InterPro"/>
</dbReference>
<dbReference type="GO" id="GO:0000049">
    <property type="term" value="F:tRNA binding"/>
    <property type="evidence" value="ECO:0007669"/>
    <property type="project" value="UniProtKB-UniRule"/>
</dbReference>
<dbReference type="GO" id="GO:0006412">
    <property type="term" value="P:translation"/>
    <property type="evidence" value="ECO:0007669"/>
    <property type="project" value="UniProtKB-UniRule"/>
</dbReference>
<dbReference type="FunFam" id="3.30.70.600:FF:000003">
    <property type="entry name" value="30S ribosomal protein S10"/>
    <property type="match status" value="1"/>
</dbReference>
<dbReference type="Gene3D" id="3.30.70.600">
    <property type="entry name" value="Ribosomal protein S10 domain"/>
    <property type="match status" value="1"/>
</dbReference>
<dbReference type="HAMAP" id="MF_00508">
    <property type="entry name" value="Ribosomal_uS10"/>
    <property type="match status" value="1"/>
</dbReference>
<dbReference type="InterPro" id="IPR001848">
    <property type="entry name" value="Ribosomal_uS10"/>
</dbReference>
<dbReference type="InterPro" id="IPR018268">
    <property type="entry name" value="Ribosomal_uS10_CS"/>
</dbReference>
<dbReference type="InterPro" id="IPR027486">
    <property type="entry name" value="Ribosomal_uS10_dom"/>
</dbReference>
<dbReference type="InterPro" id="IPR036838">
    <property type="entry name" value="Ribosomal_uS10_dom_sf"/>
</dbReference>
<dbReference type="NCBIfam" id="NF001861">
    <property type="entry name" value="PRK00596.1"/>
    <property type="match status" value="1"/>
</dbReference>
<dbReference type="NCBIfam" id="TIGR01049">
    <property type="entry name" value="rpsJ_bact"/>
    <property type="match status" value="1"/>
</dbReference>
<dbReference type="PANTHER" id="PTHR11700">
    <property type="entry name" value="30S RIBOSOMAL PROTEIN S10 FAMILY MEMBER"/>
    <property type="match status" value="1"/>
</dbReference>
<dbReference type="Pfam" id="PF00338">
    <property type="entry name" value="Ribosomal_S10"/>
    <property type="match status" value="1"/>
</dbReference>
<dbReference type="PRINTS" id="PR00971">
    <property type="entry name" value="RIBOSOMALS10"/>
</dbReference>
<dbReference type="SMART" id="SM01403">
    <property type="entry name" value="Ribosomal_S10"/>
    <property type="match status" value="1"/>
</dbReference>
<dbReference type="SUPFAM" id="SSF54999">
    <property type="entry name" value="Ribosomal protein S10"/>
    <property type="match status" value="1"/>
</dbReference>
<dbReference type="PROSITE" id="PS00361">
    <property type="entry name" value="RIBOSOMAL_S10"/>
    <property type="match status" value="1"/>
</dbReference>
<keyword id="KW-0687">Ribonucleoprotein</keyword>
<keyword id="KW-0689">Ribosomal protein</keyword>
<reference key="1">
    <citation type="journal article" date="2005" name="Science">
        <title>Extensive DNA inversions in the B. fragilis genome control variable gene expression.</title>
        <authorList>
            <person name="Cerdeno-Tarraga A.-M."/>
            <person name="Patrick S."/>
            <person name="Crossman L.C."/>
            <person name="Blakely G."/>
            <person name="Abratt V."/>
            <person name="Lennard N."/>
            <person name="Poxton I."/>
            <person name="Duerden B."/>
            <person name="Harris B."/>
            <person name="Quail M.A."/>
            <person name="Barron A."/>
            <person name="Clark L."/>
            <person name="Corton C."/>
            <person name="Doggett J."/>
            <person name="Holden M.T.G."/>
            <person name="Larke N."/>
            <person name="Line A."/>
            <person name="Lord A."/>
            <person name="Norbertczak H."/>
            <person name="Ormond D."/>
            <person name="Price C."/>
            <person name="Rabbinowitsch E."/>
            <person name="Woodward J."/>
            <person name="Barrell B.G."/>
            <person name="Parkhill J."/>
        </authorList>
    </citation>
    <scope>NUCLEOTIDE SEQUENCE [LARGE SCALE GENOMIC DNA]</scope>
    <source>
        <strain>ATCC 25285 / DSM 2151 / CCUG 4856 / JCM 11019 / LMG 10263 / NCTC 9343 / Onslow / VPI 2553 / EN-2</strain>
    </source>
</reference>
<evidence type="ECO:0000255" key="1">
    <source>
        <dbReference type="HAMAP-Rule" id="MF_00508"/>
    </source>
</evidence>
<evidence type="ECO:0000305" key="2"/>
<accession>Q5L8A8</accession>
<organism>
    <name type="scientific">Bacteroides fragilis (strain ATCC 25285 / DSM 2151 / CCUG 4856 / JCM 11019 / LMG 10263 / NCTC 9343 / Onslow / VPI 2553 / EN-2)</name>
    <dbReference type="NCBI Taxonomy" id="272559"/>
    <lineage>
        <taxon>Bacteria</taxon>
        <taxon>Pseudomonadati</taxon>
        <taxon>Bacteroidota</taxon>
        <taxon>Bacteroidia</taxon>
        <taxon>Bacteroidales</taxon>
        <taxon>Bacteroidaceae</taxon>
        <taxon>Bacteroides</taxon>
    </lineage>
</organism>
<proteinExistence type="inferred from homology"/>
<comment type="function">
    <text evidence="1">Involved in the binding of tRNA to the ribosomes.</text>
</comment>
<comment type="subunit">
    <text evidence="1">Part of the 30S ribosomal subunit.</text>
</comment>
<comment type="similarity">
    <text evidence="1">Belongs to the universal ribosomal protein uS10 family.</text>
</comment>
<gene>
    <name evidence="1" type="primary">rpsJ</name>
    <name type="ordered locus">BF4004</name>
</gene>
<feature type="chain" id="PRO_0000237017" description="Small ribosomal subunit protein uS10">
    <location>
        <begin position="1"/>
        <end position="101"/>
    </location>
</feature>
<sequence>MSQKIRIKLKSYDHNLVDKSAEKIVRTVKATGAIVSGPIPLPTHKRIFTVNRSTFVNKKSREQFELSSFKRLIDIYSSTAKTVDALMKLELPSGVEVEIKV</sequence>
<name>RS10_BACFN</name>
<protein>
    <recommendedName>
        <fullName evidence="1">Small ribosomal subunit protein uS10</fullName>
    </recommendedName>
    <alternativeName>
        <fullName evidence="2">30S ribosomal protein S10</fullName>
    </alternativeName>
</protein>